<comment type="function">
    <text evidence="1">Cell wall formation. Adds enolpyruvyl to UDP-N-acetylglucosamine.</text>
</comment>
<comment type="catalytic activity">
    <reaction evidence="1">
        <text>phosphoenolpyruvate + UDP-N-acetyl-alpha-D-glucosamine = UDP-N-acetyl-3-O-(1-carboxyvinyl)-alpha-D-glucosamine + phosphate</text>
        <dbReference type="Rhea" id="RHEA:18681"/>
        <dbReference type="ChEBI" id="CHEBI:43474"/>
        <dbReference type="ChEBI" id="CHEBI:57705"/>
        <dbReference type="ChEBI" id="CHEBI:58702"/>
        <dbReference type="ChEBI" id="CHEBI:68483"/>
        <dbReference type="EC" id="2.5.1.7"/>
    </reaction>
</comment>
<comment type="pathway">
    <text evidence="1">Cell wall biogenesis; peptidoglycan biosynthesis.</text>
</comment>
<comment type="subcellular location">
    <subcellularLocation>
        <location evidence="1">Cytoplasm</location>
    </subcellularLocation>
</comment>
<comment type="similarity">
    <text evidence="1">Belongs to the EPSP synthase family. MurA subfamily.</text>
</comment>
<evidence type="ECO:0000255" key="1">
    <source>
        <dbReference type="HAMAP-Rule" id="MF_00111"/>
    </source>
</evidence>
<gene>
    <name evidence="1" type="primary">murA</name>
    <name type="ordered locus">Dalk_2781</name>
</gene>
<dbReference type="EC" id="2.5.1.7" evidence="1"/>
<dbReference type="EMBL" id="CP001322">
    <property type="protein sequence ID" value="ACL04473.1"/>
    <property type="molecule type" value="Genomic_DNA"/>
</dbReference>
<dbReference type="RefSeq" id="WP_015947543.1">
    <property type="nucleotide sequence ID" value="NC_011768.1"/>
</dbReference>
<dbReference type="SMR" id="B8FKV1"/>
<dbReference type="KEGG" id="dal:Dalk_2781"/>
<dbReference type="eggNOG" id="COG0766">
    <property type="taxonomic scope" value="Bacteria"/>
</dbReference>
<dbReference type="HOGENOM" id="CLU_027387_0_0_7"/>
<dbReference type="UniPathway" id="UPA00219"/>
<dbReference type="Proteomes" id="UP000000739">
    <property type="component" value="Chromosome"/>
</dbReference>
<dbReference type="GO" id="GO:0005737">
    <property type="term" value="C:cytoplasm"/>
    <property type="evidence" value="ECO:0007669"/>
    <property type="project" value="UniProtKB-SubCell"/>
</dbReference>
<dbReference type="GO" id="GO:0008760">
    <property type="term" value="F:UDP-N-acetylglucosamine 1-carboxyvinyltransferase activity"/>
    <property type="evidence" value="ECO:0007669"/>
    <property type="project" value="UniProtKB-UniRule"/>
</dbReference>
<dbReference type="GO" id="GO:0051301">
    <property type="term" value="P:cell division"/>
    <property type="evidence" value="ECO:0007669"/>
    <property type="project" value="UniProtKB-KW"/>
</dbReference>
<dbReference type="GO" id="GO:0071555">
    <property type="term" value="P:cell wall organization"/>
    <property type="evidence" value="ECO:0007669"/>
    <property type="project" value="UniProtKB-KW"/>
</dbReference>
<dbReference type="GO" id="GO:0009252">
    <property type="term" value="P:peptidoglycan biosynthetic process"/>
    <property type="evidence" value="ECO:0007669"/>
    <property type="project" value="UniProtKB-UniRule"/>
</dbReference>
<dbReference type="GO" id="GO:0008360">
    <property type="term" value="P:regulation of cell shape"/>
    <property type="evidence" value="ECO:0007669"/>
    <property type="project" value="UniProtKB-KW"/>
</dbReference>
<dbReference type="GO" id="GO:0019277">
    <property type="term" value="P:UDP-N-acetylgalactosamine biosynthetic process"/>
    <property type="evidence" value="ECO:0007669"/>
    <property type="project" value="InterPro"/>
</dbReference>
<dbReference type="CDD" id="cd01555">
    <property type="entry name" value="UdpNAET"/>
    <property type="match status" value="1"/>
</dbReference>
<dbReference type="FunFam" id="3.65.10.10:FF:000001">
    <property type="entry name" value="UDP-N-acetylglucosamine 1-carboxyvinyltransferase"/>
    <property type="match status" value="1"/>
</dbReference>
<dbReference type="Gene3D" id="3.65.10.10">
    <property type="entry name" value="Enolpyruvate transferase domain"/>
    <property type="match status" value="2"/>
</dbReference>
<dbReference type="HAMAP" id="MF_00111">
    <property type="entry name" value="MurA"/>
    <property type="match status" value="1"/>
</dbReference>
<dbReference type="InterPro" id="IPR001986">
    <property type="entry name" value="Enolpyruvate_Tfrase_dom"/>
</dbReference>
<dbReference type="InterPro" id="IPR036968">
    <property type="entry name" value="Enolpyruvate_Tfrase_sf"/>
</dbReference>
<dbReference type="InterPro" id="IPR050068">
    <property type="entry name" value="MurA_subfamily"/>
</dbReference>
<dbReference type="InterPro" id="IPR013792">
    <property type="entry name" value="RNA3'P_cycl/enolpyr_Trfase_a/b"/>
</dbReference>
<dbReference type="InterPro" id="IPR005750">
    <property type="entry name" value="UDP_GlcNAc_COvinyl_MurA"/>
</dbReference>
<dbReference type="NCBIfam" id="TIGR01072">
    <property type="entry name" value="murA"/>
    <property type="match status" value="1"/>
</dbReference>
<dbReference type="NCBIfam" id="NF006873">
    <property type="entry name" value="PRK09369.1"/>
    <property type="match status" value="1"/>
</dbReference>
<dbReference type="PANTHER" id="PTHR43783">
    <property type="entry name" value="UDP-N-ACETYLGLUCOSAMINE 1-CARBOXYVINYLTRANSFERASE"/>
    <property type="match status" value="1"/>
</dbReference>
<dbReference type="PANTHER" id="PTHR43783:SF1">
    <property type="entry name" value="UDP-N-ACETYLGLUCOSAMINE 1-CARBOXYVINYLTRANSFERASE"/>
    <property type="match status" value="1"/>
</dbReference>
<dbReference type="Pfam" id="PF00275">
    <property type="entry name" value="EPSP_synthase"/>
    <property type="match status" value="1"/>
</dbReference>
<dbReference type="SUPFAM" id="SSF55205">
    <property type="entry name" value="EPT/RTPC-like"/>
    <property type="match status" value="1"/>
</dbReference>
<sequence length="416" mass="44294">MDKIIVEGGRTLSGEVQVSGAKNAALPILAASLLVDGWNTFYNVPELQDISTIGLLLEHLGAKVEKDGHTIKIDASGLCETEAPYDLVRRMRASVLVLGPLTARLKKARVSLPGGCAIGARPIDQHLRGLEMLGATVELSHGYVEVQAEKLRGADIYLDTPTVTGTENLMMAACLAEGVTILRNVAREPEIVALADLLNRMGGKVEGAGSPVLTITGVEALNPVEFTIIPDRIEAGTFMVAAALTEGDVLVKDAVPAHLQALISKLRLAGATVTEEGNGIRVQGKRPICSVDVKTLPHPGFPTDMQAQFMVLMTTAKGLSVIAETIFENRFIHVSELVRMGANISISQNSAVIRGVKHLSAAPVMATDLRASASLILAGLIAQGSTEIHRVYHIDRGYESIEQKFSQLGAAVRRVK</sequence>
<protein>
    <recommendedName>
        <fullName evidence="1">UDP-N-acetylglucosamine 1-carboxyvinyltransferase</fullName>
        <ecNumber evidence="1">2.5.1.7</ecNumber>
    </recommendedName>
    <alternativeName>
        <fullName evidence="1">Enoylpyruvate transferase</fullName>
    </alternativeName>
    <alternativeName>
        <fullName evidence="1">UDP-N-acetylglucosamine enolpyruvyl transferase</fullName>
        <shortName evidence="1">EPT</shortName>
    </alternativeName>
</protein>
<accession>B8FKV1</accession>
<keyword id="KW-0131">Cell cycle</keyword>
<keyword id="KW-0132">Cell division</keyword>
<keyword id="KW-0133">Cell shape</keyword>
<keyword id="KW-0961">Cell wall biogenesis/degradation</keyword>
<keyword id="KW-0963">Cytoplasm</keyword>
<keyword id="KW-0573">Peptidoglycan synthesis</keyword>
<keyword id="KW-0670">Pyruvate</keyword>
<keyword id="KW-1185">Reference proteome</keyword>
<keyword id="KW-0808">Transferase</keyword>
<reference key="1">
    <citation type="journal article" date="2012" name="Environ. Microbiol.">
        <title>The genome sequence of Desulfatibacillum alkenivorans AK-01: a blueprint for anaerobic alkane oxidation.</title>
        <authorList>
            <person name="Callaghan A.V."/>
            <person name="Morris B.E."/>
            <person name="Pereira I.A."/>
            <person name="McInerney M.J."/>
            <person name="Austin R.N."/>
            <person name="Groves J.T."/>
            <person name="Kukor J.J."/>
            <person name="Suflita J.M."/>
            <person name="Young L.Y."/>
            <person name="Zylstra G.J."/>
            <person name="Wawrik B."/>
        </authorList>
    </citation>
    <scope>NUCLEOTIDE SEQUENCE [LARGE SCALE GENOMIC DNA]</scope>
    <source>
        <strain>AK-01</strain>
    </source>
</reference>
<name>MURA_DESAL</name>
<proteinExistence type="inferred from homology"/>
<feature type="chain" id="PRO_1000117502" description="UDP-N-acetylglucosamine 1-carboxyvinyltransferase">
    <location>
        <begin position="1"/>
        <end position="416"/>
    </location>
</feature>
<feature type="active site" description="Proton donor" evidence="1">
    <location>
        <position position="116"/>
    </location>
</feature>
<feature type="binding site" evidence="1">
    <location>
        <begin position="22"/>
        <end position="23"/>
    </location>
    <ligand>
        <name>phosphoenolpyruvate</name>
        <dbReference type="ChEBI" id="CHEBI:58702"/>
    </ligand>
</feature>
<feature type="binding site" evidence="1">
    <location>
        <position position="92"/>
    </location>
    <ligand>
        <name>UDP-N-acetyl-alpha-D-glucosamine</name>
        <dbReference type="ChEBI" id="CHEBI:57705"/>
    </ligand>
</feature>
<feature type="binding site" evidence="1">
    <location>
        <begin position="121"/>
        <end position="125"/>
    </location>
    <ligand>
        <name>UDP-N-acetyl-alpha-D-glucosamine</name>
        <dbReference type="ChEBI" id="CHEBI:57705"/>
    </ligand>
</feature>
<feature type="binding site" evidence="1">
    <location>
        <position position="304"/>
    </location>
    <ligand>
        <name>UDP-N-acetyl-alpha-D-glucosamine</name>
        <dbReference type="ChEBI" id="CHEBI:57705"/>
    </ligand>
</feature>
<feature type="binding site" evidence="1">
    <location>
        <position position="326"/>
    </location>
    <ligand>
        <name>UDP-N-acetyl-alpha-D-glucosamine</name>
        <dbReference type="ChEBI" id="CHEBI:57705"/>
    </ligand>
</feature>
<feature type="modified residue" description="2-(S-cysteinyl)pyruvic acid O-phosphothioketal" evidence="1">
    <location>
        <position position="116"/>
    </location>
</feature>
<organism>
    <name type="scientific">Desulfatibacillum aliphaticivorans</name>
    <dbReference type="NCBI Taxonomy" id="218208"/>
    <lineage>
        <taxon>Bacteria</taxon>
        <taxon>Pseudomonadati</taxon>
        <taxon>Thermodesulfobacteriota</taxon>
        <taxon>Desulfobacteria</taxon>
        <taxon>Desulfobacterales</taxon>
        <taxon>Desulfatibacillaceae</taxon>
        <taxon>Desulfatibacillum</taxon>
    </lineage>
</organism>